<keyword id="KW-1003">Cell membrane</keyword>
<keyword id="KW-0170">Cobalt</keyword>
<keyword id="KW-0171">Cobalt transport</keyword>
<keyword id="KW-0406">Ion transport</keyword>
<keyword id="KW-0472">Membrane</keyword>
<keyword id="KW-0533">Nickel</keyword>
<keyword id="KW-0921">Nickel transport</keyword>
<keyword id="KW-1185">Reference proteome</keyword>
<keyword id="KW-0812">Transmembrane</keyword>
<keyword id="KW-1133">Transmembrane helix</keyword>
<keyword id="KW-0813">Transport</keyword>
<keyword id="KW-0862">Zinc</keyword>
<keyword id="KW-0864">Zinc transport</keyword>
<name>CNTC_STAA8</name>
<organism>
    <name type="scientific">Staphylococcus aureus (strain NCTC 8325 / PS 47)</name>
    <dbReference type="NCBI Taxonomy" id="93061"/>
    <lineage>
        <taxon>Bacteria</taxon>
        <taxon>Bacillati</taxon>
        <taxon>Bacillota</taxon>
        <taxon>Bacilli</taxon>
        <taxon>Bacillales</taxon>
        <taxon>Staphylococcaceae</taxon>
        <taxon>Staphylococcus</taxon>
    </lineage>
</organism>
<proteinExistence type="evidence at protein level"/>
<reference key="1">
    <citation type="book" date="2006" name="Gram positive pathogens, 2nd edition">
        <title>The Staphylococcus aureus NCTC 8325 genome.</title>
        <editorList>
            <person name="Fischetti V."/>
            <person name="Novick R."/>
            <person name="Ferretti J."/>
            <person name="Portnoy D."/>
            <person name="Rood J."/>
        </editorList>
        <authorList>
            <person name="Gillaspy A.F."/>
            <person name="Worrell V."/>
            <person name="Orvis J."/>
            <person name="Roe B.A."/>
            <person name="Dyer D.W."/>
            <person name="Iandolo J.J."/>
        </authorList>
    </citation>
    <scope>NUCLEOTIDE SEQUENCE [LARGE SCALE GENOMIC DNA]</scope>
    <source>
        <strain>NCTC 8325 / PS 47</strain>
    </source>
</reference>
<reference key="2">
    <citation type="journal article" date="2013" name="Mol. Microbiol.">
        <title>The Staphylococcus aureus Opp1 ABC transporter imports nickel and cobalt in zinc-depleted conditions and contributes to virulence.</title>
        <authorList>
            <person name="Remy L."/>
            <person name="Carriere M."/>
            <person name="Derre-Bobillot A."/>
            <person name="Martini C."/>
            <person name="Sanguinetti M."/>
            <person name="Borezee-Durant E."/>
        </authorList>
    </citation>
    <scope>FUNCTION</scope>
    <scope>ACTIVITY REGULATION</scope>
    <scope>SUBUNIT</scope>
    <scope>INDUCTION</scope>
    <scope>DISRUPTION PHENOTYPE</scope>
    <source>
        <strain>RN6390</strain>
    </source>
</reference>
<reference key="3">
    <citation type="journal article" date="2018" name="Proc. Natl. Acad. Sci. U.S.A.">
        <title>Mechanistic insights into staphylopine-mediated metal acquisition.</title>
        <authorList>
            <person name="Song L."/>
            <person name="Zhang Y."/>
            <person name="Chen W."/>
            <person name="Gu T."/>
            <person name="Zhang S.Y."/>
            <person name="Ji Q."/>
        </authorList>
    </citation>
    <scope>FUNCTION</scope>
    <scope>SUBUNIT</scope>
</reference>
<dbReference type="EMBL" id="CP000253">
    <property type="protein sequence ID" value="ABD31769.1"/>
    <property type="molecule type" value="Genomic_DNA"/>
</dbReference>
<dbReference type="RefSeq" id="WP_000584765.1">
    <property type="nucleotide sequence ID" value="NZ_LS483365.1"/>
</dbReference>
<dbReference type="RefSeq" id="YP_501224.1">
    <property type="nucleotide sequence ID" value="NC_007795.1"/>
</dbReference>
<dbReference type="SMR" id="Q2FVE9"/>
<dbReference type="STRING" id="93061.SAOUHSC_02765"/>
<dbReference type="TCDB" id="3.A.1.5.43">
    <property type="family name" value="the atp-binding cassette (abc) superfamily"/>
</dbReference>
<dbReference type="PaxDb" id="1280-SAXN108_2719"/>
<dbReference type="GeneID" id="3921420"/>
<dbReference type="GeneID" id="98346779"/>
<dbReference type="KEGG" id="sao:SAOUHSC_02765"/>
<dbReference type="PATRIC" id="fig|93061.5.peg.2500"/>
<dbReference type="eggNOG" id="COG1173">
    <property type="taxonomic scope" value="Bacteria"/>
</dbReference>
<dbReference type="HOGENOM" id="CLU_028518_1_1_9"/>
<dbReference type="OrthoDB" id="9797472at2"/>
<dbReference type="Proteomes" id="UP000008816">
    <property type="component" value="Chromosome"/>
</dbReference>
<dbReference type="GO" id="GO:0005886">
    <property type="term" value="C:plasma membrane"/>
    <property type="evidence" value="ECO:0000318"/>
    <property type="project" value="GO_Central"/>
</dbReference>
<dbReference type="GO" id="GO:0022857">
    <property type="term" value="F:transmembrane transporter activity"/>
    <property type="evidence" value="ECO:0000318"/>
    <property type="project" value="GO_Central"/>
</dbReference>
<dbReference type="GO" id="GO:0006824">
    <property type="term" value="P:cobalt ion transport"/>
    <property type="evidence" value="ECO:0007669"/>
    <property type="project" value="UniProtKB-KW"/>
</dbReference>
<dbReference type="GO" id="GO:0015675">
    <property type="term" value="P:nickel cation transport"/>
    <property type="evidence" value="ECO:0007669"/>
    <property type="project" value="UniProtKB-KW"/>
</dbReference>
<dbReference type="GO" id="GO:0006829">
    <property type="term" value="P:zinc ion transport"/>
    <property type="evidence" value="ECO:0007669"/>
    <property type="project" value="UniProtKB-KW"/>
</dbReference>
<dbReference type="CDD" id="cd06261">
    <property type="entry name" value="TM_PBP2"/>
    <property type="match status" value="1"/>
</dbReference>
<dbReference type="Gene3D" id="1.10.3720.10">
    <property type="entry name" value="MetI-like"/>
    <property type="match status" value="1"/>
</dbReference>
<dbReference type="InterPro" id="IPR050366">
    <property type="entry name" value="BP-dependent_transpt_permease"/>
</dbReference>
<dbReference type="InterPro" id="IPR000515">
    <property type="entry name" value="MetI-like"/>
</dbReference>
<dbReference type="InterPro" id="IPR035906">
    <property type="entry name" value="MetI-like_sf"/>
</dbReference>
<dbReference type="InterPro" id="IPR025966">
    <property type="entry name" value="OppC_N"/>
</dbReference>
<dbReference type="InterPro" id="IPR053474">
    <property type="entry name" value="Staphylopine_ABC_permease"/>
</dbReference>
<dbReference type="NCBIfam" id="NF047573">
    <property type="entry name" value="opine_perm_CntC"/>
    <property type="match status" value="1"/>
</dbReference>
<dbReference type="NCBIfam" id="NF045473">
    <property type="entry name" value="Opp1C"/>
    <property type="match status" value="1"/>
</dbReference>
<dbReference type="PANTHER" id="PTHR43386:SF1">
    <property type="entry name" value="D,D-DIPEPTIDE TRANSPORT SYSTEM PERMEASE PROTEIN DDPC-RELATED"/>
    <property type="match status" value="1"/>
</dbReference>
<dbReference type="PANTHER" id="PTHR43386">
    <property type="entry name" value="OLIGOPEPTIDE TRANSPORT SYSTEM PERMEASE PROTEIN APPC"/>
    <property type="match status" value="1"/>
</dbReference>
<dbReference type="Pfam" id="PF00528">
    <property type="entry name" value="BPD_transp_1"/>
    <property type="match status" value="1"/>
</dbReference>
<dbReference type="Pfam" id="PF12911">
    <property type="entry name" value="OppC_N"/>
    <property type="match status" value="1"/>
</dbReference>
<dbReference type="SUPFAM" id="SSF161098">
    <property type="entry name" value="MetI-like"/>
    <property type="match status" value="1"/>
</dbReference>
<dbReference type="PROSITE" id="PS50928">
    <property type="entry name" value="ABC_TM1"/>
    <property type="match status" value="1"/>
</dbReference>
<feature type="chain" id="PRO_0000447273" description="Metal-staphylopine import system permease protein CntC">
    <location>
        <begin position="1"/>
        <end position="289"/>
    </location>
</feature>
<feature type="transmembrane region" description="Helical" evidence="1">
    <location>
        <begin position="13"/>
        <end position="33"/>
    </location>
</feature>
<feature type="transmembrane region" description="Helical" evidence="1">
    <location>
        <begin position="77"/>
        <end position="97"/>
    </location>
</feature>
<feature type="transmembrane region" description="Helical" evidence="1">
    <location>
        <begin position="115"/>
        <end position="135"/>
    </location>
</feature>
<feature type="transmembrane region" description="Helical" evidence="1">
    <location>
        <begin position="194"/>
        <end position="214"/>
    </location>
</feature>
<feature type="transmembrane region" description="Helical" evidence="1">
    <location>
        <begin position="249"/>
        <end position="269"/>
    </location>
</feature>
<feature type="domain" description="ABC transmembrane type-1" evidence="2">
    <location>
        <begin position="73"/>
        <end position="262"/>
    </location>
</feature>
<comment type="function">
    <text evidence="3 4">Part of the ABC transporter complex CntABCDF (Opp1) involved in the uptake of metal in complex with the metallophore staphylopine (StP). Involved in the import of divalent metals ions such as nickel, cobalt and zinc. Probably responsible for the translocation of the substrate across the membrane (PubMed:23279021, PubMed:29581261). Plays a major role in nickel/cobalt import in zinc-depleted conditions. Contributes to virulence. Required for full urease activity in vitro (PubMed:23279021).</text>
</comment>
<comment type="activity regulation">
    <text evidence="3">Nickel/cobalt import is reduced in the presence of zinc.</text>
</comment>
<comment type="subunit">
    <text evidence="7 8">The complex is composed of two ATP-binding proteins (CntD and CntF), two transmembrane proteins (CntB and CntC) and a solute-binding protein (CntA).</text>
</comment>
<comment type="subcellular location">
    <subcellularLocation>
        <location evidence="6">Cell membrane</location>
        <topology evidence="1">Multi-pass membrane protein</topology>
    </subcellularLocation>
</comment>
<comment type="induction">
    <text evidence="3">Repressed by zinc.</text>
</comment>
<comment type="disruption phenotype">
    <text evidence="3">Deletion of the cntABCDF genes decreases nickel and cobalt intracellular levels and decreases virulence.</text>
</comment>
<comment type="similarity">
    <text evidence="6">Belongs to the binding-protein-dependent transport system permease family.</text>
</comment>
<sequence>MIILKRLLQDKGAVIALGIIVLYVFLGLAAPLVTFYDPNHIDTANKFAGMSFQHLLGTDHLGRDILTRLIYAIRPSLLYVFVALFVSVLIGSILGFLSGYFQGFVDALIMRACDVMLAFPSYVVTLALIALFGMGAENIIMAFILTRWAWFCRVIRTSVMQYTASDHVRFAKTIGMNDMKIIHKHIMPLTLADIAIISSSSMCSMILQISGFSFLGLGVKAPTAEWGMMLNEARKVMFTHPEMMFAPGIAIVIIVMAFNFLSDALQIAIDPRISSKDKLRSVKKGVVQS</sequence>
<protein>
    <recommendedName>
        <fullName evidence="6">Metal-staphylopine import system permease protein CntC</fullName>
    </recommendedName>
</protein>
<gene>
    <name evidence="5" type="primary">cntC</name>
    <name evidence="5" type="synonym">opp1C</name>
    <name evidence="9" type="ordered locus">SAOUHSC_02765</name>
</gene>
<accession>Q2FVE9</accession>
<evidence type="ECO:0000255" key="1"/>
<evidence type="ECO:0000255" key="2">
    <source>
        <dbReference type="PROSITE-ProRule" id="PRU00441"/>
    </source>
</evidence>
<evidence type="ECO:0000269" key="3">
    <source>
    </source>
</evidence>
<evidence type="ECO:0000269" key="4">
    <source>
    </source>
</evidence>
<evidence type="ECO:0000303" key="5">
    <source>
    </source>
</evidence>
<evidence type="ECO:0000305" key="6"/>
<evidence type="ECO:0000305" key="7">
    <source>
    </source>
</evidence>
<evidence type="ECO:0000305" key="8">
    <source>
    </source>
</evidence>
<evidence type="ECO:0000312" key="9">
    <source>
        <dbReference type="EMBL" id="ABD31769.1"/>
    </source>
</evidence>